<feature type="chain" id="PRO_0000341911" description="2-succinyl-6-hydroxy-2,4-cyclohexadiene-1-carboxylate synthase">
    <location>
        <begin position="1"/>
        <end position="252"/>
    </location>
</feature>
<comment type="function">
    <text evidence="1">Catalyzes a proton abstraction reaction that results in 2,5-elimination of pyruvate from 2-succinyl-5-enolpyruvyl-6-hydroxy-3-cyclohexene-1-carboxylate (SEPHCHC) and the formation of 2-succinyl-6-hydroxy-2,4-cyclohexadiene-1-carboxylate (SHCHC).</text>
</comment>
<comment type="catalytic activity">
    <reaction evidence="1">
        <text>5-enolpyruvoyl-6-hydroxy-2-succinyl-cyclohex-3-ene-1-carboxylate = (1R,6R)-6-hydroxy-2-succinyl-cyclohexa-2,4-diene-1-carboxylate + pyruvate</text>
        <dbReference type="Rhea" id="RHEA:25597"/>
        <dbReference type="ChEBI" id="CHEBI:15361"/>
        <dbReference type="ChEBI" id="CHEBI:58689"/>
        <dbReference type="ChEBI" id="CHEBI:58818"/>
        <dbReference type="EC" id="4.2.99.20"/>
    </reaction>
</comment>
<comment type="pathway">
    <text evidence="1">Quinol/quinone metabolism; 1,4-dihydroxy-2-naphthoate biosynthesis; 1,4-dihydroxy-2-naphthoate from chorismate: step 3/7.</text>
</comment>
<comment type="pathway">
    <text evidence="1">Quinol/quinone metabolism; menaquinone biosynthesis.</text>
</comment>
<comment type="subunit">
    <text evidence="1">Monomer.</text>
</comment>
<comment type="similarity">
    <text evidence="1">Belongs to the AB hydrolase superfamily. MenH family.</text>
</comment>
<organism>
    <name type="scientific">Escherichia coli O1:K1 / APEC</name>
    <dbReference type="NCBI Taxonomy" id="405955"/>
    <lineage>
        <taxon>Bacteria</taxon>
        <taxon>Pseudomonadati</taxon>
        <taxon>Pseudomonadota</taxon>
        <taxon>Gammaproteobacteria</taxon>
        <taxon>Enterobacterales</taxon>
        <taxon>Enterobacteriaceae</taxon>
        <taxon>Escherichia</taxon>
    </lineage>
</organism>
<name>MENH_ECOK1</name>
<gene>
    <name evidence="1" type="primary">menH</name>
    <name type="ordered locus">Ecok1_21610</name>
    <name type="ORF">APECO1_4298</name>
</gene>
<keyword id="KW-0456">Lyase</keyword>
<keyword id="KW-0474">Menaquinone biosynthesis</keyword>
<keyword id="KW-1185">Reference proteome</keyword>
<evidence type="ECO:0000255" key="1">
    <source>
        <dbReference type="HAMAP-Rule" id="MF_01660"/>
    </source>
</evidence>
<proteinExistence type="inferred from homology"/>
<accession>A1ADB5</accession>
<dbReference type="EC" id="4.2.99.20" evidence="1"/>
<dbReference type="EMBL" id="CP000468">
    <property type="protein sequence ID" value="ABJ01655.1"/>
    <property type="molecule type" value="Genomic_DNA"/>
</dbReference>
<dbReference type="RefSeq" id="WP_000600529.1">
    <property type="nucleotide sequence ID" value="NZ_CADILS010000004.1"/>
</dbReference>
<dbReference type="SMR" id="A1ADB5"/>
<dbReference type="ESTHER" id="ecoli-YFBB">
    <property type="family name" value="MenH_SHCHC"/>
</dbReference>
<dbReference type="MEROPS" id="S33.996"/>
<dbReference type="KEGG" id="ecv:APECO1_4298"/>
<dbReference type="HOGENOM" id="CLU_020336_38_2_6"/>
<dbReference type="UniPathway" id="UPA00079"/>
<dbReference type="UniPathway" id="UPA01057">
    <property type="reaction ID" value="UER00900"/>
</dbReference>
<dbReference type="Proteomes" id="UP000008216">
    <property type="component" value="Chromosome"/>
</dbReference>
<dbReference type="GO" id="GO:0070205">
    <property type="term" value="F:2-succinyl-6-hydroxy-2,4-cyclohexadiene-1-carboxylate synthase activity"/>
    <property type="evidence" value="ECO:0007669"/>
    <property type="project" value="UniProtKB-UniRule"/>
</dbReference>
<dbReference type="GO" id="GO:0009234">
    <property type="term" value="P:menaquinone biosynthetic process"/>
    <property type="evidence" value="ECO:0007669"/>
    <property type="project" value="UniProtKB-UniRule"/>
</dbReference>
<dbReference type="FunFam" id="3.40.50.1820:FF:000038">
    <property type="entry name" value="2-succinyl-6-hydroxy-2,4-cyclohexadiene-1-carboxylate synthase"/>
    <property type="match status" value="1"/>
</dbReference>
<dbReference type="Gene3D" id="3.40.50.1820">
    <property type="entry name" value="alpha/beta hydrolase"/>
    <property type="match status" value="1"/>
</dbReference>
<dbReference type="HAMAP" id="MF_01660">
    <property type="entry name" value="MenH"/>
    <property type="match status" value="1"/>
</dbReference>
<dbReference type="InterPro" id="IPR000073">
    <property type="entry name" value="AB_hydrolase_1"/>
</dbReference>
<dbReference type="InterPro" id="IPR029058">
    <property type="entry name" value="AB_hydrolase_fold"/>
</dbReference>
<dbReference type="InterPro" id="IPR022485">
    <property type="entry name" value="SHCHC_synthase_MenH"/>
</dbReference>
<dbReference type="NCBIfam" id="TIGR03695">
    <property type="entry name" value="menH_SHCHC"/>
    <property type="match status" value="1"/>
</dbReference>
<dbReference type="NCBIfam" id="NF008340">
    <property type="entry name" value="PRK11126.1"/>
    <property type="match status" value="1"/>
</dbReference>
<dbReference type="PANTHER" id="PTHR42916">
    <property type="entry name" value="2-SUCCINYL-5-ENOLPYRUVYL-6-HYDROXY-3-CYCLOHEXENE-1-CARBOXYLATE SYNTHASE"/>
    <property type="match status" value="1"/>
</dbReference>
<dbReference type="PANTHER" id="PTHR42916:SF1">
    <property type="entry name" value="PROTEIN PHYLLO, CHLOROPLASTIC"/>
    <property type="match status" value="1"/>
</dbReference>
<dbReference type="Pfam" id="PF12697">
    <property type="entry name" value="Abhydrolase_6"/>
    <property type="match status" value="1"/>
</dbReference>
<dbReference type="SUPFAM" id="SSF53474">
    <property type="entry name" value="alpha/beta-Hydrolases"/>
    <property type="match status" value="1"/>
</dbReference>
<protein>
    <recommendedName>
        <fullName evidence="1">2-succinyl-6-hydroxy-2,4-cyclohexadiene-1-carboxylate synthase</fullName>
        <shortName evidence="1">SHCHC synthase</shortName>
        <ecNumber evidence="1">4.2.99.20</ecNumber>
    </recommendedName>
</protein>
<sequence>MILHAQAKHGKPGLPWLVFLHGFSGDCHEWQEVGEAFADYSRLYVDLPGHGGSATISVDGFDDVTGLLCKTLVSYNILNFWLVGYSLGGRVAMMAACQEPAGLCGVVVEGGHPGLQNAEQRAERQRSDRQWAQRFRTEPLTAVFADWYQQPVFASLNDDQRRELVALRSNNNGATLAAMLEATSLAVQPDLRANLSARTFAFYYLCGERDSKFRALAAELAADCHVIPRAGHNAHRENPAGVIASLAQILRF</sequence>
<reference key="1">
    <citation type="journal article" date="2007" name="J. Bacteriol.">
        <title>The genome sequence of avian pathogenic Escherichia coli strain O1:K1:H7 shares strong similarities with human extraintestinal pathogenic E. coli genomes.</title>
        <authorList>
            <person name="Johnson T.J."/>
            <person name="Kariyawasam S."/>
            <person name="Wannemuehler Y."/>
            <person name="Mangiamele P."/>
            <person name="Johnson S.J."/>
            <person name="Doetkott C."/>
            <person name="Skyberg J.A."/>
            <person name="Lynne A.M."/>
            <person name="Johnson J.R."/>
            <person name="Nolan L.K."/>
        </authorList>
    </citation>
    <scope>NUCLEOTIDE SEQUENCE [LARGE SCALE GENOMIC DNA]</scope>
</reference>